<keyword id="KW-1003">Cell membrane</keyword>
<keyword id="KW-0133">Cell shape</keyword>
<keyword id="KW-0963">Cytoplasm</keyword>
<keyword id="KW-0206">Cytoskeleton</keyword>
<keyword id="KW-0449">Lipoprotein</keyword>
<keyword id="KW-0472">Membrane</keyword>
<keyword id="KW-0564">Palmitate</keyword>
<keyword id="KW-0581">Phagocytosis</keyword>
<keyword id="KW-1185">Reference proteome</keyword>
<evidence type="ECO:0000250" key="1"/>
<evidence type="ECO:0000255" key="2">
    <source>
        <dbReference type="PROSITE-ProRule" id="PRU00057"/>
    </source>
</evidence>
<evidence type="ECO:0000256" key="3">
    <source>
        <dbReference type="SAM" id="MobiDB-lite"/>
    </source>
</evidence>
<evidence type="ECO:0000305" key="4"/>
<sequence>MSEFWHKLGCCVVEKPQPKKKRRRIDRTMIGEPMNFVHLTHIGSGEMGAGDGLAMTGAVQEQMRSKGNHRDRPWSNSRAL</sequence>
<gene>
    <name type="primary">Cdc42se1</name>
</gene>
<comment type="function">
    <text evidence="1">Probably involved in the organization of the actin cytoskeleton by acting downstream of CDC42, inducing actin filament assembly. Alters CDC42-induced cell shape changes. In activated T-cells, may play a role in CDC42-mediated F-actin accumulation at the immunological synapse. May play a role in early contractile events in phagocytosis in macrophages (By similarity).</text>
</comment>
<comment type="subunit">
    <text evidence="1">Interacts with CDC42 (in GTP-bound form). Interacts weakly with RAC1 and not at all with RHOA (By similarity).</text>
</comment>
<comment type="subcellular location">
    <subcellularLocation>
        <location evidence="1">Cytoplasm</location>
        <location evidence="1">Cytoskeleton</location>
    </subcellularLocation>
    <subcellularLocation>
        <location evidence="1">Cell membrane</location>
        <topology evidence="1">Lipid-anchor</topology>
    </subcellularLocation>
</comment>
<comment type="domain">
    <text evidence="1">The CRIB domain mediates interaction with CDC42.</text>
</comment>
<comment type="similarity">
    <text evidence="4">Belongs to the CDC42SE/SPEC family.</text>
</comment>
<reference key="1">
    <citation type="journal article" date="2005" name="Science">
        <title>The transcriptional landscape of the mammalian genome.</title>
        <authorList>
            <person name="Carninci P."/>
            <person name="Kasukawa T."/>
            <person name="Katayama S."/>
            <person name="Gough J."/>
            <person name="Frith M.C."/>
            <person name="Maeda N."/>
            <person name="Oyama R."/>
            <person name="Ravasi T."/>
            <person name="Lenhard B."/>
            <person name="Wells C."/>
            <person name="Kodzius R."/>
            <person name="Shimokawa K."/>
            <person name="Bajic V.B."/>
            <person name="Brenner S.E."/>
            <person name="Batalov S."/>
            <person name="Forrest A.R."/>
            <person name="Zavolan M."/>
            <person name="Davis M.J."/>
            <person name="Wilming L.G."/>
            <person name="Aidinis V."/>
            <person name="Allen J.E."/>
            <person name="Ambesi-Impiombato A."/>
            <person name="Apweiler R."/>
            <person name="Aturaliya R.N."/>
            <person name="Bailey T.L."/>
            <person name="Bansal M."/>
            <person name="Baxter L."/>
            <person name="Beisel K.W."/>
            <person name="Bersano T."/>
            <person name="Bono H."/>
            <person name="Chalk A.M."/>
            <person name="Chiu K.P."/>
            <person name="Choudhary V."/>
            <person name="Christoffels A."/>
            <person name="Clutterbuck D.R."/>
            <person name="Crowe M.L."/>
            <person name="Dalla E."/>
            <person name="Dalrymple B.P."/>
            <person name="de Bono B."/>
            <person name="Della Gatta G."/>
            <person name="di Bernardo D."/>
            <person name="Down T."/>
            <person name="Engstrom P."/>
            <person name="Fagiolini M."/>
            <person name="Faulkner G."/>
            <person name="Fletcher C.F."/>
            <person name="Fukushima T."/>
            <person name="Furuno M."/>
            <person name="Futaki S."/>
            <person name="Gariboldi M."/>
            <person name="Georgii-Hemming P."/>
            <person name="Gingeras T.R."/>
            <person name="Gojobori T."/>
            <person name="Green R.E."/>
            <person name="Gustincich S."/>
            <person name="Harbers M."/>
            <person name="Hayashi Y."/>
            <person name="Hensch T.K."/>
            <person name="Hirokawa N."/>
            <person name="Hill D."/>
            <person name="Huminiecki L."/>
            <person name="Iacono M."/>
            <person name="Ikeo K."/>
            <person name="Iwama A."/>
            <person name="Ishikawa T."/>
            <person name="Jakt M."/>
            <person name="Kanapin A."/>
            <person name="Katoh M."/>
            <person name="Kawasawa Y."/>
            <person name="Kelso J."/>
            <person name="Kitamura H."/>
            <person name="Kitano H."/>
            <person name="Kollias G."/>
            <person name="Krishnan S.P."/>
            <person name="Kruger A."/>
            <person name="Kummerfeld S.K."/>
            <person name="Kurochkin I.V."/>
            <person name="Lareau L.F."/>
            <person name="Lazarevic D."/>
            <person name="Lipovich L."/>
            <person name="Liu J."/>
            <person name="Liuni S."/>
            <person name="McWilliam S."/>
            <person name="Madan Babu M."/>
            <person name="Madera M."/>
            <person name="Marchionni L."/>
            <person name="Matsuda H."/>
            <person name="Matsuzawa S."/>
            <person name="Miki H."/>
            <person name="Mignone F."/>
            <person name="Miyake S."/>
            <person name="Morris K."/>
            <person name="Mottagui-Tabar S."/>
            <person name="Mulder N."/>
            <person name="Nakano N."/>
            <person name="Nakauchi H."/>
            <person name="Ng P."/>
            <person name="Nilsson R."/>
            <person name="Nishiguchi S."/>
            <person name="Nishikawa S."/>
            <person name="Nori F."/>
            <person name="Ohara O."/>
            <person name="Okazaki Y."/>
            <person name="Orlando V."/>
            <person name="Pang K.C."/>
            <person name="Pavan W.J."/>
            <person name="Pavesi G."/>
            <person name="Pesole G."/>
            <person name="Petrovsky N."/>
            <person name="Piazza S."/>
            <person name="Reed J."/>
            <person name="Reid J.F."/>
            <person name="Ring B.Z."/>
            <person name="Ringwald M."/>
            <person name="Rost B."/>
            <person name="Ruan Y."/>
            <person name="Salzberg S.L."/>
            <person name="Sandelin A."/>
            <person name="Schneider C."/>
            <person name="Schoenbach C."/>
            <person name="Sekiguchi K."/>
            <person name="Semple C.A."/>
            <person name="Seno S."/>
            <person name="Sessa L."/>
            <person name="Sheng Y."/>
            <person name="Shibata Y."/>
            <person name="Shimada H."/>
            <person name="Shimada K."/>
            <person name="Silva D."/>
            <person name="Sinclair B."/>
            <person name="Sperling S."/>
            <person name="Stupka E."/>
            <person name="Sugiura K."/>
            <person name="Sultana R."/>
            <person name="Takenaka Y."/>
            <person name="Taki K."/>
            <person name="Tammoja K."/>
            <person name="Tan S.L."/>
            <person name="Tang S."/>
            <person name="Taylor M.S."/>
            <person name="Tegner J."/>
            <person name="Teichmann S.A."/>
            <person name="Ueda H.R."/>
            <person name="van Nimwegen E."/>
            <person name="Verardo R."/>
            <person name="Wei C.L."/>
            <person name="Yagi K."/>
            <person name="Yamanishi H."/>
            <person name="Zabarovsky E."/>
            <person name="Zhu S."/>
            <person name="Zimmer A."/>
            <person name="Hide W."/>
            <person name="Bult C."/>
            <person name="Grimmond S.M."/>
            <person name="Teasdale R.D."/>
            <person name="Liu E.T."/>
            <person name="Brusic V."/>
            <person name="Quackenbush J."/>
            <person name="Wahlestedt C."/>
            <person name="Mattick J.S."/>
            <person name="Hume D.A."/>
            <person name="Kai C."/>
            <person name="Sasaki D."/>
            <person name="Tomaru Y."/>
            <person name="Fukuda S."/>
            <person name="Kanamori-Katayama M."/>
            <person name="Suzuki M."/>
            <person name="Aoki J."/>
            <person name="Arakawa T."/>
            <person name="Iida J."/>
            <person name="Imamura K."/>
            <person name="Itoh M."/>
            <person name="Kato T."/>
            <person name="Kawaji H."/>
            <person name="Kawagashira N."/>
            <person name="Kawashima T."/>
            <person name="Kojima M."/>
            <person name="Kondo S."/>
            <person name="Konno H."/>
            <person name="Nakano K."/>
            <person name="Ninomiya N."/>
            <person name="Nishio T."/>
            <person name="Okada M."/>
            <person name="Plessy C."/>
            <person name="Shibata K."/>
            <person name="Shiraki T."/>
            <person name="Suzuki S."/>
            <person name="Tagami M."/>
            <person name="Waki K."/>
            <person name="Watahiki A."/>
            <person name="Okamura-Oho Y."/>
            <person name="Suzuki H."/>
            <person name="Kawai J."/>
            <person name="Hayashizaki Y."/>
        </authorList>
    </citation>
    <scope>NUCLEOTIDE SEQUENCE [LARGE SCALE MRNA]</scope>
    <source>
        <strain>C57BL/6J</strain>
        <tissue>Liver</tissue>
        <tissue>Skin</tissue>
        <tissue>Stomach</tissue>
    </source>
</reference>
<reference key="2">
    <citation type="journal article" date="2004" name="Genome Res.">
        <title>The status, quality, and expansion of the NIH full-length cDNA project: the Mammalian Gene Collection (MGC).</title>
        <authorList>
            <consortium name="The MGC Project Team"/>
        </authorList>
    </citation>
    <scope>NUCLEOTIDE SEQUENCE [LARGE SCALE MRNA]</scope>
    <source>
        <tissue>Testis</tissue>
    </source>
</reference>
<reference key="3">
    <citation type="journal article" date="2010" name="Cell">
        <title>A tissue-specific atlas of mouse protein phosphorylation and expression.</title>
        <authorList>
            <person name="Huttlin E.L."/>
            <person name="Jedrychowski M.P."/>
            <person name="Elias J.E."/>
            <person name="Goswami T."/>
            <person name="Rad R."/>
            <person name="Beausoleil S.A."/>
            <person name="Villen J."/>
            <person name="Haas W."/>
            <person name="Sowa M.E."/>
            <person name="Gygi S.P."/>
        </authorList>
    </citation>
    <scope>IDENTIFICATION BY MASS SPECTROMETRY [LARGE SCALE ANALYSIS]</scope>
    <source>
        <tissue>Lung</tissue>
        <tissue>Spleen</tissue>
    </source>
</reference>
<organism>
    <name type="scientific">Mus musculus</name>
    <name type="common">Mouse</name>
    <dbReference type="NCBI Taxonomy" id="10090"/>
    <lineage>
        <taxon>Eukaryota</taxon>
        <taxon>Metazoa</taxon>
        <taxon>Chordata</taxon>
        <taxon>Craniata</taxon>
        <taxon>Vertebrata</taxon>
        <taxon>Euteleostomi</taxon>
        <taxon>Mammalia</taxon>
        <taxon>Eutheria</taxon>
        <taxon>Euarchontoglires</taxon>
        <taxon>Glires</taxon>
        <taxon>Rodentia</taxon>
        <taxon>Myomorpha</taxon>
        <taxon>Muroidea</taxon>
        <taxon>Muridae</taxon>
        <taxon>Murinae</taxon>
        <taxon>Mus</taxon>
        <taxon>Mus</taxon>
    </lineage>
</organism>
<accession>Q8BHL7</accession>
<feature type="chain" id="PRO_0000334630" description="CDC42 small effector protein 1">
    <location>
        <begin position="1"/>
        <end position="80"/>
    </location>
</feature>
<feature type="domain" description="CRIB" evidence="2">
    <location>
        <begin position="30"/>
        <end position="43"/>
    </location>
</feature>
<feature type="region of interest" description="Disordered" evidence="3">
    <location>
        <begin position="48"/>
        <end position="80"/>
    </location>
</feature>
<feature type="lipid moiety-binding region" description="S-palmitoyl cysteine" evidence="1">
    <location>
        <position position="10"/>
    </location>
</feature>
<feature type="lipid moiety-binding region" description="S-palmitoyl cysteine" evidence="1">
    <location>
        <position position="11"/>
    </location>
</feature>
<protein>
    <recommendedName>
        <fullName>CDC42 small effector protein 1</fullName>
    </recommendedName>
</protein>
<name>C42S1_MOUSE</name>
<proteinExistence type="evidence at protein level"/>
<dbReference type="EMBL" id="AK004859">
    <property type="protein sequence ID" value="BAC25099.1"/>
    <property type="molecule type" value="mRNA"/>
</dbReference>
<dbReference type="EMBL" id="AK019052">
    <property type="protein sequence ID" value="BAC25576.1"/>
    <property type="molecule type" value="mRNA"/>
</dbReference>
<dbReference type="EMBL" id="AK028573">
    <property type="protein sequence ID" value="BAC26014.1"/>
    <property type="molecule type" value="mRNA"/>
</dbReference>
<dbReference type="EMBL" id="BC060964">
    <property type="protein sequence ID" value="AAH60964.1"/>
    <property type="molecule type" value="mRNA"/>
</dbReference>
<dbReference type="CCDS" id="CCDS38545.1"/>
<dbReference type="RefSeq" id="NP_001033797.1">
    <property type="nucleotide sequence ID" value="NM_001038708.3"/>
</dbReference>
<dbReference type="RefSeq" id="NP_765983.1">
    <property type="nucleotide sequence ID" value="NM_172395.3"/>
</dbReference>
<dbReference type="FunCoup" id="Q8BHL7">
    <property type="interactions" value="156"/>
</dbReference>
<dbReference type="STRING" id="10090.ENSMUSP00000052986"/>
<dbReference type="iPTMnet" id="Q8BHL7"/>
<dbReference type="PhosphoSitePlus" id="Q8BHL7"/>
<dbReference type="SwissPalm" id="Q8BHL7"/>
<dbReference type="PaxDb" id="10090-ENSMUSP00000052986"/>
<dbReference type="PeptideAtlas" id="Q8BHL7"/>
<dbReference type="ProteomicsDB" id="281716"/>
<dbReference type="Pumba" id="Q8BHL7"/>
<dbReference type="Antibodypedia" id="34046">
    <property type="antibodies" value="10 antibodies from 9 providers"/>
</dbReference>
<dbReference type="DNASU" id="57912"/>
<dbReference type="Ensembl" id="ENSMUST00000053872.12">
    <property type="protein sequence ID" value="ENSMUSP00000052986.6"/>
    <property type="gene ID" value="ENSMUSG00000046722.15"/>
</dbReference>
<dbReference type="Ensembl" id="ENSMUST00000107201.9">
    <property type="protein sequence ID" value="ENSMUSP00000102819.3"/>
    <property type="gene ID" value="ENSMUSG00000046722.15"/>
</dbReference>
<dbReference type="GeneID" id="57912"/>
<dbReference type="KEGG" id="mmu:57912"/>
<dbReference type="UCSC" id="uc008qiu.2">
    <property type="organism name" value="mouse"/>
</dbReference>
<dbReference type="AGR" id="MGI:1889510"/>
<dbReference type="CTD" id="56882"/>
<dbReference type="MGI" id="MGI:1889510">
    <property type="gene designation" value="Cdc42se1"/>
</dbReference>
<dbReference type="VEuPathDB" id="HostDB:ENSMUSG00000046722"/>
<dbReference type="eggNOG" id="ENOG502S499">
    <property type="taxonomic scope" value="Eukaryota"/>
</dbReference>
<dbReference type="GeneTree" id="ENSGT00940000160112"/>
<dbReference type="HOGENOM" id="CLU_173417_1_0_1"/>
<dbReference type="InParanoid" id="Q8BHL7"/>
<dbReference type="OMA" id="DRPWNNS"/>
<dbReference type="OrthoDB" id="5559822at2759"/>
<dbReference type="PhylomeDB" id="Q8BHL7"/>
<dbReference type="TreeFam" id="TF323815"/>
<dbReference type="BioGRID-ORCS" id="57912">
    <property type="hits" value="5 hits in 78 CRISPR screens"/>
</dbReference>
<dbReference type="ChiTaRS" id="Cdc42se1">
    <property type="organism name" value="mouse"/>
</dbReference>
<dbReference type="PRO" id="PR:Q8BHL7"/>
<dbReference type="Proteomes" id="UP000000589">
    <property type="component" value="Chromosome 3"/>
</dbReference>
<dbReference type="RNAct" id="Q8BHL7">
    <property type="molecule type" value="protein"/>
</dbReference>
<dbReference type="Bgee" id="ENSMUSG00000046722">
    <property type="expression patterns" value="Expressed in granulocyte and 265 other cell types or tissues"/>
</dbReference>
<dbReference type="ExpressionAtlas" id="Q8BHL7">
    <property type="expression patterns" value="baseline and differential"/>
</dbReference>
<dbReference type="GO" id="GO:0005938">
    <property type="term" value="C:cell cortex"/>
    <property type="evidence" value="ECO:0000250"/>
    <property type="project" value="MGI"/>
</dbReference>
<dbReference type="GO" id="GO:0030054">
    <property type="term" value="C:cell junction"/>
    <property type="evidence" value="ECO:0007669"/>
    <property type="project" value="Ensembl"/>
</dbReference>
<dbReference type="GO" id="GO:0005856">
    <property type="term" value="C:cytoskeleton"/>
    <property type="evidence" value="ECO:0007669"/>
    <property type="project" value="UniProtKB-SubCell"/>
</dbReference>
<dbReference type="GO" id="GO:0005886">
    <property type="term" value="C:plasma membrane"/>
    <property type="evidence" value="ECO:0007669"/>
    <property type="project" value="UniProtKB-SubCell"/>
</dbReference>
<dbReference type="GO" id="GO:0031267">
    <property type="term" value="F:small GTPase binding"/>
    <property type="evidence" value="ECO:0007669"/>
    <property type="project" value="InterPro"/>
</dbReference>
<dbReference type="GO" id="GO:0046329">
    <property type="term" value="P:negative regulation of JNK cascade"/>
    <property type="evidence" value="ECO:0000250"/>
    <property type="project" value="MGI"/>
</dbReference>
<dbReference type="GO" id="GO:0006909">
    <property type="term" value="P:phagocytosis"/>
    <property type="evidence" value="ECO:0007669"/>
    <property type="project" value="UniProtKB-KW"/>
</dbReference>
<dbReference type="GO" id="GO:0008360">
    <property type="term" value="P:regulation of cell shape"/>
    <property type="evidence" value="ECO:0000250"/>
    <property type="project" value="MGI"/>
</dbReference>
<dbReference type="GO" id="GO:0035023">
    <property type="term" value="P:regulation of Rho protein signal transduction"/>
    <property type="evidence" value="ECO:0007669"/>
    <property type="project" value="InterPro"/>
</dbReference>
<dbReference type="GO" id="GO:0007264">
    <property type="term" value="P:small GTPase-mediated signal transduction"/>
    <property type="evidence" value="ECO:0000250"/>
    <property type="project" value="MGI"/>
</dbReference>
<dbReference type="FunFam" id="3.90.810.10:FF:000015">
    <property type="entry name" value="CDC42 small effector protein 1"/>
    <property type="match status" value="1"/>
</dbReference>
<dbReference type="Gene3D" id="3.90.810.10">
    <property type="entry name" value="CRIB domain"/>
    <property type="match status" value="1"/>
</dbReference>
<dbReference type="InterPro" id="IPR000095">
    <property type="entry name" value="CRIB_dom"/>
</dbReference>
<dbReference type="InterPro" id="IPR036936">
    <property type="entry name" value="CRIB_dom_sf"/>
</dbReference>
<dbReference type="InterPro" id="IPR039056">
    <property type="entry name" value="SPEC"/>
</dbReference>
<dbReference type="PANTHER" id="PTHR13502:SF3">
    <property type="entry name" value="CDC42 SMALL EFFECTOR PROTEIN 1"/>
    <property type="match status" value="1"/>
</dbReference>
<dbReference type="PANTHER" id="PTHR13502">
    <property type="entry name" value="CDC42 SMALL EFFECTOR PROTEIN HOMOLOG"/>
    <property type="match status" value="1"/>
</dbReference>
<dbReference type="PROSITE" id="PS50108">
    <property type="entry name" value="CRIB"/>
    <property type="match status" value="1"/>
</dbReference>